<dbReference type="EC" id="6.1.1.16"/>
<dbReference type="EMBL" id="U00089">
    <property type="protein sequence ID" value="AAB96128.1"/>
    <property type="molecule type" value="Genomic_DNA"/>
</dbReference>
<dbReference type="PIR" id="S73806">
    <property type="entry name" value="S73806"/>
</dbReference>
<dbReference type="RefSeq" id="NP_110044.1">
    <property type="nucleotide sequence ID" value="NC_000912.1"/>
</dbReference>
<dbReference type="RefSeq" id="WP_010874712.1">
    <property type="nucleotide sequence ID" value="NZ_OU342337.1"/>
</dbReference>
<dbReference type="SMR" id="P75423"/>
<dbReference type="STRING" id="272634.MPN_356"/>
<dbReference type="EnsemblBacteria" id="AAB96128">
    <property type="protein sequence ID" value="AAB96128"/>
    <property type="gene ID" value="MPN_356"/>
</dbReference>
<dbReference type="KEGG" id="mpn:MPN_356"/>
<dbReference type="PATRIC" id="fig|272634.6.peg.383"/>
<dbReference type="HOGENOM" id="CLU_013528_0_0_14"/>
<dbReference type="OrthoDB" id="9815130at2"/>
<dbReference type="BioCyc" id="MPNE272634:G1GJ3-559-MONOMER"/>
<dbReference type="Proteomes" id="UP000000808">
    <property type="component" value="Chromosome"/>
</dbReference>
<dbReference type="GO" id="GO:0005829">
    <property type="term" value="C:cytosol"/>
    <property type="evidence" value="ECO:0007669"/>
    <property type="project" value="TreeGrafter"/>
</dbReference>
<dbReference type="GO" id="GO:0005524">
    <property type="term" value="F:ATP binding"/>
    <property type="evidence" value="ECO:0007669"/>
    <property type="project" value="UniProtKB-UniRule"/>
</dbReference>
<dbReference type="GO" id="GO:0004817">
    <property type="term" value="F:cysteine-tRNA ligase activity"/>
    <property type="evidence" value="ECO:0007669"/>
    <property type="project" value="UniProtKB-UniRule"/>
</dbReference>
<dbReference type="GO" id="GO:0008270">
    <property type="term" value="F:zinc ion binding"/>
    <property type="evidence" value="ECO:0007669"/>
    <property type="project" value="UniProtKB-UniRule"/>
</dbReference>
<dbReference type="GO" id="GO:0006423">
    <property type="term" value="P:cysteinyl-tRNA aminoacylation"/>
    <property type="evidence" value="ECO:0007669"/>
    <property type="project" value="UniProtKB-UniRule"/>
</dbReference>
<dbReference type="CDD" id="cd00672">
    <property type="entry name" value="CysRS_core"/>
    <property type="match status" value="1"/>
</dbReference>
<dbReference type="Gene3D" id="1.20.120.1910">
    <property type="entry name" value="Cysteine-tRNA ligase, C-terminal anti-codon recognition domain"/>
    <property type="match status" value="1"/>
</dbReference>
<dbReference type="Gene3D" id="3.40.50.620">
    <property type="entry name" value="HUPs"/>
    <property type="match status" value="1"/>
</dbReference>
<dbReference type="HAMAP" id="MF_00041">
    <property type="entry name" value="Cys_tRNA_synth"/>
    <property type="match status" value="1"/>
</dbReference>
<dbReference type="InterPro" id="IPR015803">
    <property type="entry name" value="Cys-tRNA-ligase"/>
</dbReference>
<dbReference type="InterPro" id="IPR015273">
    <property type="entry name" value="Cys-tRNA-synt_Ia_DALR"/>
</dbReference>
<dbReference type="InterPro" id="IPR024909">
    <property type="entry name" value="Cys-tRNA/MSH_ligase"/>
</dbReference>
<dbReference type="InterPro" id="IPR014729">
    <property type="entry name" value="Rossmann-like_a/b/a_fold"/>
</dbReference>
<dbReference type="InterPro" id="IPR032678">
    <property type="entry name" value="tRNA-synt_1_cat_dom"/>
</dbReference>
<dbReference type="InterPro" id="IPR009080">
    <property type="entry name" value="tRNAsynth_Ia_anticodon-bd"/>
</dbReference>
<dbReference type="NCBIfam" id="TIGR00435">
    <property type="entry name" value="cysS"/>
    <property type="match status" value="1"/>
</dbReference>
<dbReference type="PANTHER" id="PTHR10890:SF3">
    <property type="entry name" value="CYSTEINE--TRNA LIGASE, CYTOPLASMIC"/>
    <property type="match status" value="1"/>
</dbReference>
<dbReference type="PANTHER" id="PTHR10890">
    <property type="entry name" value="CYSTEINYL-TRNA SYNTHETASE"/>
    <property type="match status" value="1"/>
</dbReference>
<dbReference type="Pfam" id="PF09190">
    <property type="entry name" value="DALR_2"/>
    <property type="match status" value="1"/>
</dbReference>
<dbReference type="Pfam" id="PF01406">
    <property type="entry name" value="tRNA-synt_1e"/>
    <property type="match status" value="1"/>
</dbReference>
<dbReference type="PRINTS" id="PR00983">
    <property type="entry name" value="TRNASYNTHCYS"/>
</dbReference>
<dbReference type="SUPFAM" id="SSF47323">
    <property type="entry name" value="Anticodon-binding domain of a subclass of class I aminoacyl-tRNA synthetases"/>
    <property type="match status" value="1"/>
</dbReference>
<dbReference type="SUPFAM" id="SSF52374">
    <property type="entry name" value="Nucleotidylyl transferase"/>
    <property type="match status" value="1"/>
</dbReference>
<accession>P75423</accession>
<reference key="1">
    <citation type="journal article" date="1996" name="Nucleic Acids Res.">
        <title>Complete sequence analysis of the genome of the bacterium Mycoplasma pneumoniae.</title>
        <authorList>
            <person name="Himmelreich R."/>
            <person name="Hilbert H."/>
            <person name="Plagens H."/>
            <person name="Pirkl E."/>
            <person name="Li B.-C."/>
            <person name="Herrmann R."/>
        </authorList>
    </citation>
    <scope>NUCLEOTIDE SEQUENCE [LARGE SCALE GENOMIC DNA]</scope>
    <source>
        <strain>ATCC 29342 / M129 / Subtype 1</strain>
    </source>
</reference>
<proteinExistence type="inferred from homology"/>
<name>SYC_MYCPN</name>
<feature type="chain" id="PRO_0000159433" description="Cysteine--tRNA ligase">
    <location>
        <begin position="1"/>
        <end position="437"/>
    </location>
</feature>
<feature type="short sequence motif" description="'HIGH' region">
    <location>
        <begin position="33"/>
        <end position="43"/>
    </location>
</feature>
<feature type="short sequence motif" description="'KMSKS' region">
    <location>
        <begin position="262"/>
        <end position="266"/>
    </location>
</feature>
<feature type="binding site" evidence="1">
    <location>
        <position position="31"/>
    </location>
    <ligand>
        <name>Zn(2+)</name>
        <dbReference type="ChEBI" id="CHEBI:29105"/>
    </ligand>
</feature>
<feature type="binding site" evidence="1">
    <location>
        <position position="205"/>
    </location>
    <ligand>
        <name>Zn(2+)</name>
        <dbReference type="ChEBI" id="CHEBI:29105"/>
    </ligand>
</feature>
<feature type="binding site" evidence="1">
    <location>
        <position position="230"/>
    </location>
    <ligand>
        <name>Zn(2+)</name>
        <dbReference type="ChEBI" id="CHEBI:29105"/>
    </ligand>
</feature>
<feature type="binding site" evidence="1">
    <location>
        <position position="234"/>
    </location>
    <ligand>
        <name>Zn(2+)</name>
        <dbReference type="ChEBI" id="CHEBI:29105"/>
    </ligand>
</feature>
<feature type="binding site" evidence="1">
    <location>
        <position position="265"/>
    </location>
    <ligand>
        <name>ATP</name>
        <dbReference type="ChEBI" id="CHEBI:30616"/>
    </ligand>
</feature>
<comment type="catalytic activity">
    <reaction>
        <text>tRNA(Cys) + L-cysteine + ATP = L-cysteinyl-tRNA(Cys) + AMP + diphosphate</text>
        <dbReference type="Rhea" id="RHEA:17773"/>
        <dbReference type="Rhea" id="RHEA-COMP:9661"/>
        <dbReference type="Rhea" id="RHEA-COMP:9679"/>
        <dbReference type="ChEBI" id="CHEBI:30616"/>
        <dbReference type="ChEBI" id="CHEBI:33019"/>
        <dbReference type="ChEBI" id="CHEBI:35235"/>
        <dbReference type="ChEBI" id="CHEBI:78442"/>
        <dbReference type="ChEBI" id="CHEBI:78517"/>
        <dbReference type="ChEBI" id="CHEBI:456215"/>
        <dbReference type="EC" id="6.1.1.16"/>
    </reaction>
</comment>
<comment type="cofactor">
    <cofactor evidence="1">
        <name>Zn(2+)</name>
        <dbReference type="ChEBI" id="CHEBI:29105"/>
    </cofactor>
    <text evidence="1">Binds 1 zinc ion per subunit.</text>
</comment>
<comment type="subunit">
    <text evidence="1">Monomer.</text>
</comment>
<comment type="subcellular location">
    <subcellularLocation>
        <location evidence="1">Cytoplasm</location>
    </subcellularLocation>
</comment>
<comment type="similarity">
    <text evidence="2">Belongs to the class-I aminoacyl-tRNA synthetase family.</text>
</comment>
<protein>
    <recommendedName>
        <fullName>Cysteine--tRNA ligase</fullName>
        <ecNumber>6.1.1.16</ecNumber>
    </recommendedName>
    <alternativeName>
        <fullName>Cysteinyl-tRNA synthetase</fullName>
        <shortName>CysRS</shortName>
    </alternativeName>
</protein>
<keyword id="KW-0030">Aminoacyl-tRNA synthetase</keyword>
<keyword id="KW-0067">ATP-binding</keyword>
<keyword id="KW-0963">Cytoplasm</keyword>
<keyword id="KW-0436">Ligase</keyword>
<keyword id="KW-0479">Metal-binding</keyword>
<keyword id="KW-0547">Nucleotide-binding</keyword>
<keyword id="KW-0648">Protein biosynthesis</keyword>
<keyword id="KW-1185">Reference proteome</keyword>
<keyword id="KW-0862">Zinc</keyword>
<gene>
    <name type="primary">cysS</name>
    <name type="ordered locus">MPN_356</name>
    <name type="ORF">MP480</name>
</gene>
<sequence length="437" mass="50665">MNQFEPKFTLIDTVSNQSVVLEQKQINIYLCGPTVYNDLHLGNTRPLIVFDVLQRVLQAAQYKVQFVQNITDIDDKIIKIAQQQEISEAQLCKQQITAYKSLLKKLNILPIKHLQVTDKIDKMPGYIARLVKKGFAYVSPLGNTYFSVSQLPQYGILANRVVETIEDEATDKRNKLDFVLWKQTTAGVKWNSPWGWGRPGWHVECAFLIDYSFKDQLTIHGGGVDLKFPHHENENAMHMALYDKPLTQHWMHIGHLMFENQKMSKSLQNFLLAVDFLTIHDFRILRWLFYQKHYYHPLDLSQSLIEQACSDIKRIQKAVNVCRTWFVYSEQSAIPAPKQFEPVFKALLNNLNFANAITHIWKLVKQINHDVSKQNLSGLKEHLSHLEWALNILGIGFKSIHTKLNVQLIKKWASLRKNGQLDKADEVRQKLIKKGLL</sequence>
<evidence type="ECO:0000250" key="1"/>
<evidence type="ECO:0000305" key="2"/>
<organism>
    <name type="scientific">Mycoplasma pneumoniae (strain ATCC 29342 / M129 / Subtype 1)</name>
    <name type="common">Mycoplasmoides pneumoniae</name>
    <dbReference type="NCBI Taxonomy" id="272634"/>
    <lineage>
        <taxon>Bacteria</taxon>
        <taxon>Bacillati</taxon>
        <taxon>Mycoplasmatota</taxon>
        <taxon>Mycoplasmoidales</taxon>
        <taxon>Mycoplasmoidaceae</taxon>
        <taxon>Mycoplasmoides</taxon>
    </lineage>
</organism>